<dbReference type="EC" id="1.-.-.-"/>
<dbReference type="EMBL" id="AE005174">
    <property type="protein sequence ID" value="AAG57595.1"/>
    <property type="molecule type" value="Genomic_DNA"/>
</dbReference>
<dbReference type="EMBL" id="BA000007">
    <property type="protein sequence ID" value="BAB36770.1"/>
    <property type="molecule type" value="Genomic_DNA"/>
</dbReference>
<dbReference type="PIR" id="C91047">
    <property type="entry name" value="C91047"/>
</dbReference>
<dbReference type="PIR" id="G85891">
    <property type="entry name" value="G85891"/>
</dbReference>
<dbReference type="RefSeq" id="NP_311374.1">
    <property type="nucleotide sequence ID" value="NC_002695.1"/>
</dbReference>
<dbReference type="RefSeq" id="WP_000147987.1">
    <property type="nucleotide sequence ID" value="NZ_VOAI01000001.1"/>
</dbReference>
<dbReference type="SMR" id="P0AEW2"/>
<dbReference type="STRING" id="155864.Z3745"/>
<dbReference type="GeneID" id="915241"/>
<dbReference type="GeneID" id="93774653"/>
<dbReference type="KEGG" id="ece:Z3745"/>
<dbReference type="KEGG" id="ecs:ECs_3347"/>
<dbReference type="PATRIC" id="fig|386585.9.peg.3496"/>
<dbReference type="eggNOG" id="COG4237">
    <property type="taxonomic scope" value="Bacteria"/>
</dbReference>
<dbReference type="HOGENOM" id="CLU_088957_2_0_6"/>
<dbReference type="OMA" id="GMPMVVE"/>
<dbReference type="Proteomes" id="UP000000558">
    <property type="component" value="Chromosome"/>
</dbReference>
<dbReference type="Proteomes" id="UP000002519">
    <property type="component" value="Chromosome"/>
</dbReference>
<dbReference type="GO" id="GO:0005886">
    <property type="term" value="C:plasma membrane"/>
    <property type="evidence" value="ECO:0007669"/>
    <property type="project" value="UniProtKB-SubCell"/>
</dbReference>
<dbReference type="GO" id="GO:0016491">
    <property type="term" value="F:oxidoreductase activity"/>
    <property type="evidence" value="ECO:0007669"/>
    <property type="project" value="UniProtKB-KW"/>
</dbReference>
<dbReference type="FunFam" id="1.10.287.3510:FF:000005">
    <property type="entry name" value="Hydrogenase 4, membrane subunit"/>
    <property type="match status" value="1"/>
</dbReference>
<dbReference type="Gene3D" id="1.10.287.3510">
    <property type="match status" value="1"/>
</dbReference>
<dbReference type="InterPro" id="IPR038730">
    <property type="entry name" value="HyfE-like"/>
</dbReference>
<dbReference type="InterPro" id="IPR039428">
    <property type="entry name" value="NUOK/Mnh_C1-like"/>
</dbReference>
<dbReference type="NCBIfam" id="NF008556">
    <property type="entry name" value="PRK11492.1"/>
    <property type="match status" value="1"/>
</dbReference>
<dbReference type="PANTHER" id="PTHR38601">
    <property type="entry name" value="HYDROGENASE-4 COMPONENT E"/>
    <property type="match status" value="1"/>
</dbReference>
<dbReference type="PANTHER" id="PTHR38601:SF1">
    <property type="entry name" value="HYDROGENASE-4 COMPONENT E"/>
    <property type="match status" value="1"/>
</dbReference>
<dbReference type="Pfam" id="PF00420">
    <property type="entry name" value="Oxidored_q2"/>
    <property type="match status" value="1"/>
</dbReference>
<comment type="subcellular location">
    <subcellularLocation>
        <location evidence="1">Cell inner membrane</location>
        <topology evidence="1">Multi-pass membrane protein</topology>
    </subcellularLocation>
</comment>
<name>HYFE_ECO57</name>
<organism>
    <name type="scientific">Escherichia coli O157:H7</name>
    <dbReference type="NCBI Taxonomy" id="83334"/>
    <lineage>
        <taxon>Bacteria</taxon>
        <taxon>Pseudomonadati</taxon>
        <taxon>Pseudomonadota</taxon>
        <taxon>Gammaproteobacteria</taxon>
        <taxon>Enterobacterales</taxon>
        <taxon>Enterobacteriaceae</taxon>
        <taxon>Escherichia</taxon>
    </lineage>
</organism>
<feature type="chain" id="PRO_0000084116" description="Hydrogenase-4 component E">
    <location>
        <begin position="1"/>
        <end position="216"/>
    </location>
</feature>
<feature type="topological domain" description="Periplasmic" evidence="2">
    <location>
        <begin position="1"/>
        <end position="3"/>
    </location>
</feature>
<feature type="transmembrane region" description="Helical" evidence="2">
    <location>
        <begin position="4"/>
        <end position="24"/>
    </location>
</feature>
<feature type="topological domain" description="Cytoplasmic" evidence="2">
    <location>
        <begin position="25"/>
        <end position="38"/>
    </location>
</feature>
<feature type="transmembrane region" description="Helical" evidence="2">
    <location>
        <begin position="39"/>
        <end position="59"/>
    </location>
</feature>
<feature type="transmembrane region" description="Helical" evidence="2">
    <location>
        <begin position="60"/>
        <end position="80"/>
    </location>
</feature>
<feature type="topological domain" description="Cytoplasmic" evidence="2">
    <location>
        <begin position="81"/>
        <end position="92"/>
    </location>
</feature>
<feature type="transmembrane region" description="Helical" evidence="2">
    <location>
        <begin position="93"/>
        <end position="113"/>
    </location>
</feature>
<feature type="topological domain" description="Periplasmic" evidence="2">
    <location>
        <begin position="114"/>
        <end position="122"/>
    </location>
</feature>
<feature type="transmembrane region" description="Helical" evidence="2">
    <location>
        <begin position="123"/>
        <end position="143"/>
    </location>
</feature>
<feature type="topological domain" description="Cytoplasmic" evidence="2">
    <location>
        <begin position="144"/>
        <end position="150"/>
    </location>
</feature>
<feature type="transmembrane region" description="Helical" evidence="2">
    <location>
        <begin position="151"/>
        <end position="171"/>
    </location>
</feature>
<feature type="topological domain" description="Periplasmic" evidence="2">
    <location>
        <begin position="172"/>
        <end position="175"/>
    </location>
</feature>
<feature type="transmembrane region" description="Helical" evidence="2">
    <location>
        <begin position="176"/>
        <end position="196"/>
    </location>
</feature>
<feature type="topological domain" description="Cytoplasmic" evidence="2">
    <location>
        <begin position="197"/>
        <end position="216"/>
    </location>
</feature>
<proteinExistence type="inferred from homology"/>
<gene>
    <name type="primary">hyfE</name>
    <name type="ordered locus">Z3745</name>
    <name type="ordered locus">ECs3347</name>
</gene>
<protein>
    <recommendedName>
        <fullName>Hydrogenase-4 component E</fullName>
        <ecNumber>1.-.-.-</ecNumber>
    </recommendedName>
</protein>
<accession>P0AEW2</accession>
<accession>P77524</accession>
<reference key="1">
    <citation type="journal article" date="2001" name="Nature">
        <title>Genome sequence of enterohaemorrhagic Escherichia coli O157:H7.</title>
        <authorList>
            <person name="Perna N.T."/>
            <person name="Plunkett G. III"/>
            <person name="Burland V."/>
            <person name="Mau B."/>
            <person name="Glasner J.D."/>
            <person name="Rose D.J."/>
            <person name="Mayhew G.F."/>
            <person name="Evans P.S."/>
            <person name="Gregor J."/>
            <person name="Kirkpatrick H.A."/>
            <person name="Posfai G."/>
            <person name="Hackett J."/>
            <person name="Klink S."/>
            <person name="Boutin A."/>
            <person name="Shao Y."/>
            <person name="Miller L."/>
            <person name="Grotbeck E.J."/>
            <person name="Davis N.W."/>
            <person name="Lim A."/>
            <person name="Dimalanta E.T."/>
            <person name="Potamousis K."/>
            <person name="Apodaca J."/>
            <person name="Anantharaman T.S."/>
            <person name="Lin J."/>
            <person name="Yen G."/>
            <person name="Schwartz D.C."/>
            <person name="Welch R.A."/>
            <person name="Blattner F.R."/>
        </authorList>
    </citation>
    <scope>NUCLEOTIDE SEQUENCE [LARGE SCALE GENOMIC DNA]</scope>
    <source>
        <strain>O157:H7 / EDL933 / ATCC 700927 / EHEC</strain>
    </source>
</reference>
<reference key="2">
    <citation type="journal article" date="2001" name="DNA Res.">
        <title>Complete genome sequence of enterohemorrhagic Escherichia coli O157:H7 and genomic comparison with a laboratory strain K-12.</title>
        <authorList>
            <person name="Hayashi T."/>
            <person name="Makino K."/>
            <person name="Ohnishi M."/>
            <person name="Kurokawa K."/>
            <person name="Ishii K."/>
            <person name="Yokoyama K."/>
            <person name="Han C.-G."/>
            <person name="Ohtsubo E."/>
            <person name="Nakayama K."/>
            <person name="Murata T."/>
            <person name="Tanaka M."/>
            <person name="Tobe T."/>
            <person name="Iida T."/>
            <person name="Takami H."/>
            <person name="Honda T."/>
            <person name="Sasakawa C."/>
            <person name="Ogasawara N."/>
            <person name="Yasunaga T."/>
            <person name="Kuhara S."/>
            <person name="Shiba T."/>
            <person name="Hattori M."/>
            <person name="Shinagawa H."/>
        </authorList>
    </citation>
    <scope>NUCLEOTIDE SEQUENCE [LARGE SCALE GENOMIC DNA]</scope>
    <source>
        <strain>O157:H7 / Sakai / RIMD 0509952 / EHEC</strain>
    </source>
</reference>
<sequence length="216" mass="23361">MTGSMIVNNLAGLMMLTSLFVISVKSYRLSCGFYACQSLVLVSIFATLSCLFAAEQLLIWSASAFITKVLLVPLIMTYAARNIPQNIPEKALFGPAMMALLAALIVLLCAFVVQPVKLPMATGLKPALAVALGHFLLGLLCIVSQRNILRQIFGYCLMENGSHLVLALLAWRAPELVEIGIATDAIFAVIVMVLLARKIWRTHGTLDVNNLTALKG</sequence>
<evidence type="ECO:0000250" key="1"/>
<evidence type="ECO:0000255" key="2"/>
<keyword id="KW-0997">Cell inner membrane</keyword>
<keyword id="KW-1003">Cell membrane</keyword>
<keyword id="KW-0472">Membrane</keyword>
<keyword id="KW-0560">Oxidoreductase</keyword>
<keyword id="KW-1185">Reference proteome</keyword>
<keyword id="KW-0812">Transmembrane</keyword>
<keyword id="KW-1133">Transmembrane helix</keyword>